<sequence>MNKQVRQSKIREMLHLHEVGNQHDLIRLLEEAGIRVAQATLSRDCSELGIIRSKGLNGYRLALPEENPGNIIKGLVEVEVLSIQSNEAVIIIKTLPGRAHGVGSFLDQLKNSQILGTIAGDDTVLVIPVSVAQISQVISYIQENLSKN</sequence>
<protein>
    <recommendedName>
        <fullName evidence="1">Arginine repressor</fullName>
    </recommendedName>
</protein>
<reference key="1">
    <citation type="submission" date="2008-05" db="EMBL/GenBank/DDBJ databases">
        <title>Complete sequence of Chlorobium limicola DSM 245.</title>
        <authorList>
            <consortium name="US DOE Joint Genome Institute"/>
            <person name="Lucas S."/>
            <person name="Copeland A."/>
            <person name="Lapidus A."/>
            <person name="Glavina del Rio T."/>
            <person name="Dalin E."/>
            <person name="Tice H."/>
            <person name="Bruce D."/>
            <person name="Goodwin L."/>
            <person name="Pitluck S."/>
            <person name="Schmutz J."/>
            <person name="Larimer F."/>
            <person name="Land M."/>
            <person name="Hauser L."/>
            <person name="Kyrpides N."/>
            <person name="Ovchinnikova G."/>
            <person name="Zhao F."/>
            <person name="Li T."/>
            <person name="Liu Z."/>
            <person name="Overmann J."/>
            <person name="Bryant D.A."/>
            <person name="Richardson P."/>
        </authorList>
    </citation>
    <scope>NUCLEOTIDE SEQUENCE [LARGE SCALE GENOMIC DNA]</scope>
    <source>
        <strain>DSM 245 / NBRC 103803 / 6330</strain>
    </source>
</reference>
<comment type="function">
    <text evidence="1">Regulates arginine biosynthesis genes.</text>
</comment>
<comment type="pathway">
    <text>Amino-acid biosynthesis; L-arginine biosynthesis [regulation].</text>
</comment>
<comment type="subcellular location">
    <subcellularLocation>
        <location evidence="1">Cytoplasm</location>
    </subcellularLocation>
</comment>
<comment type="similarity">
    <text evidence="1">Belongs to the ArgR family.</text>
</comment>
<proteinExistence type="inferred from homology"/>
<accession>B3ECP1</accession>
<keyword id="KW-0028">Amino-acid biosynthesis</keyword>
<keyword id="KW-0055">Arginine biosynthesis</keyword>
<keyword id="KW-0963">Cytoplasm</keyword>
<keyword id="KW-0238">DNA-binding</keyword>
<keyword id="KW-0678">Repressor</keyword>
<keyword id="KW-0804">Transcription</keyword>
<keyword id="KW-0805">Transcription regulation</keyword>
<feature type="chain" id="PRO_1000097859" description="Arginine repressor">
    <location>
        <begin position="1"/>
        <end position="148"/>
    </location>
</feature>
<dbReference type="EMBL" id="CP001097">
    <property type="protein sequence ID" value="ACD90316.1"/>
    <property type="molecule type" value="Genomic_DNA"/>
</dbReference>
<dbReference type="RefSeq" id="WP_012466193.1">
    <property type="nucleotide sequence ID" value="NC_010803.1"/>
</dbReference>
<dbReference type="SMR" id="B3ECP1"/>
<dbReference type="STRING" id="290315.Clim_1249"/>
<dbReference type="KEGG" id="cli:Clim_1249"/>
<dbReference type="eggNOG" id="COG1438">
    <property type="taxonomic scope" value="Bacteria"/>
</dbReference>
<dbReference type="HOGENOM" id="CLU_097103_3_0_10"/>
<dbReference type="OrthoDB" id="9807089at2"/>
<dbReference type="UniPathway" id="UPA00068"/>
<dbReference type="Proteomes" id="UP000008841">
    <property type="component" value="Chromosome"/>
</dbReference>
<dbReference type="GO" id="GO:0005737">
    <property type="term" value="C:cytoplasm"/>
    <property type="evidence" value="ECO:0007669"/>
    <property type="project" value="UniProtKB-SubCell"/>
</dbReference>
<dbReference type="GO" id="GO:0034618">
    <property type="term" value="F:arginine binding"/>
    <property type="evidence" value="ECO:0007669"/>
    <property type="project" value="InterPro"/>
</dbReference>
<dbReference type="GO" id="GO:0003677">
    <property type="term" value="F:DNA binding"/>
    <property type="evidence" value="ECO:0007669"/>
    <property type="project" value="UniProtKB-KW"/>
</dbReference>
<dbReference type="GO" id="GO:0003700">
    <property type="term" value="F:DNA-binding transcription factor activity"/>
    <property type="evidence" value="ECO:0007669"/>
    <property type="project" value="UniProtKB-UniRule"/>
</dbReference>
<dbReference type="GO" id="GO:0006526">
    <property type="term" value="P:L-arginine biosynthetic process"/>
    <property type="evidence" value="ECO:0007669"/>
    <property type="project" value="UniProtKB-UniPathway"/>
</dbReference>
<dbReference type="GO" id="GO:0051259">
    <property type="term" value="P:protein complex oligomerization"/>
    <property type="evidence" value="ECO:0007669"/>
    <property type="project" value="InterPro"/>
</dbReference>
<dbReference type="GO" id="GO:1900079">
    <property type="term" value="P:regulation of arginine biosynthetic process"/>
    <property type="evidence" value="ECO:0007669"/>
    <property type="project" value="UniProtKB-UniRule"/>
</dbReference>
<dbReference type="Gene3D" id="3.30.1360.40">
    <property type="match status" value="1"/>
</dbReference>
<dbReference type="Gene3D" id="1.10.10.10">
    <property type="entry name" value="Winged helix-like DNA-binding domain superfamily/Winged helix DNA-binding domain"/>
    <property type="match status" value="1"/>
</dbReference>
<dbReference type="HAMAP" id="MF_00173">
    <property type="entry name" value="Arg_repressor"/>
    <property type="match status" value="1"/>
</dbReference>
<dbReference type="InterPro" id="IPR001669">
    <property type="entry name" value="Arg_repress"/>
</dbReference>
<dbReference type="InterPro" id="IPR020899">
    <property type="entry name" value="Arg_repress_C"/>
</dbReference>
<dbReference type="InterPro" id="IPR036251">
    <property type="entry name" value="Arg_repress_C_sf"/>
</dbReference>
<dbReference type="InterPro" id="IPR020900">
    <property type="entry name" value="Arg_repress_DNA-bd"/>
</dbReference>
<dbReference type="InterPro" id="IPR036388">
    <property type="entry name" value="WH-like_DNA-bd_sf"/>
</dbReference>
<dbReference type="InterPro" id="IPR036390">
    <property type="entry name" value="WH_DNA-bd_sf"/>
</dbReference>
<dbReference type="PANTHER" id="PTHR34471">
    <property type="entry name" value="ARGININE REPRESSOR"/>
    <property type="match status" value="1"/>
</dbReference>
<dbReference type="PANTHER" id="PTHR34471:SF1">
    <property type="entry name" value="ARGININE REPRESSOR"/>
    <property type="match status" value="1"/>
</dbReference>
<dbReference type="Pfam" id="PF01316">
    <property type="entry name" value="Arg_repressor"/>
    <property type="match status" value="1"/>
</dbReference>
<dbReference type="Pfam" id="PF02863">
    <property type="entry name" value="Arg_repressor_C"/>
    <property type="match status" value="1"/>
</dbReference>
<dbReference type="PRINTS" id="PR01467">
    <property type="entry name" value="ARGREPRESSOR"/>
</dbReference>
<dbReference type="SUPFAM" id="SSF55252">
    <property type="entry name" value="C-terminal domain of arginine repressor"/>
    <property type="match status" value="1"/>
</dbReference>
<dbReference type="SUPFAM" id="SSF46785">
    <property type="entry name" value="Winged helix' DNA-binding domain"/>
    <property type="match status" value="1"/>
</dbReference>
<evidence type="ECO:0000255" key="1">
    <source>
        <dbReference type="HAMAP-Rule" id="MF_00173"/>
    </source>
</evidence>
<name>ARGR_CHLL2</name>
<organism>
    <name type="scientific">Chlorobium limicola (strain DSM 245 / NBRC 103803 / 6330)</name>
    <dbReference type="NCBI Taxonomy" id="290315"/>
    <lineage>
        <taxon>Bacteria</taxon>
        <taxon>Pseudomonadati</taxon>
        <taxon>Chlorobiota</taxon>
        <taxon>Chlorobiia</taxon>
        <taxon>Chlorobiales</taxon>
        <taxon>Chlorobiaceae</taxon>
        <taxon>Chlorobium/Pelodictyon group</taxon>
        <taxon>Chlorobium</taxon>
    </lineage>
</organism>
<gene>
    <name evidence="1" type="primary">argR</name>
    <name type="ordered locus">Clim_1249</name>
</gene>